<organism>
    <name type="scientific">Escherichia coli O6:H1 (strain CFT073 / ATCC 700928 / UPEC)</name>
    <dbReference type="NCBI Taxonomy" id="199310"/>
    <lineage>
        <taxon>Bacteria</taxon>
        <taxon>Pseudomonadati</taxon>
        <taxon>Pseudomonadota</taxon>
        <taxon>Gammaproteobacteria</taxon>
        <taxon>Enterobacterales</taxon>
        <taxon>Enterobacteriaceae</taxon>
        <taxon>Escherichia</taxon>
    </lineage>
</organism>
<accession>Q8FHU5</accession>
<reference key="1">
    <citation type="journal article" date="2002" name="Proc. Natl. Acad. Sci. U.S.A.">
        <title>Extensive mosaic structure revealed by the complete genome sequence of uropathogenic Escherichia coli.</title>
        <authorList>
            <person name="Welch R.A."/>
            <person name="Burland V."/>
            <person name="Plunkett G. III"/>
            <person name="Redford P."/>
            <person name="Roesch P."/>
            <person name="Rasko D."/>
            <person name="Buckles E.L."/>
            <person name="Liou S.-R."/>
            <person name="Boutin A."/>
            <person name="Hackett J."/>
            <person name="Stroud D."/>
            <person name="Mayhew G.F."/>
            <person name="Rose D.J."/>
            <person name="Zhou S."/>
            <person name="Schwartz D.C."/>
            <person name="Perna N.T."/>
            <person name="Mobley H.L.T."/>
            <person name="Donnenberg M.S."/>
            <person name="Blattner F.R."/>
        </authorList>
    </citation>
    <scope>NUCLEOTIDE SEQUENCE [LARGE SCALE GENOMIC DNA]</scope>
    <source>
        <strain>CFT073 / ATCC 700928 / UPEC</strain>
    </source>
</reference>
<name>RIBA_ECOL6</name>
<feature type="chain" id="PRO_0000151756" description="GTP cyclohydrolase-2">
    <location>
        <begin position="1"/>
        <end position="196"/>
    </location>
</feature>
<feature type="active site" description="Proton acceptor" evidence="1">
    <location>
        <position position="126"/>
    </location>
</feature>
<feature type="active site" description="Nucleophile" evidence="1">
    <location>
        <position position="128"/>
    </location>
</feature>
<feature type="binding site" evidence="1">
    <location>
        <begin position="49"/>
        <end position="53"/>
    </location>
    <ligand>
        <name>GTP</name>
        <dbReference type="ChEBI" id="CHEBI:37565"/>
    </ligand>
</feature>
<feature type="binding site" evidence="1">
    <location>
        <position position="54"/>
    </location>
    <ligand>
        <name>Zn(2+)</name>
        <dbReference type="ChEBI" id="CHEBI:29105"/>
        <note>catalytic</note>
    </ligand>
</feature>
<feature type="binding site" evidence="1">
    <location>
        <position position="65"/>
    </location>
    <ligand>
        <name>Zn(2+)</name>
        <dbReference type="ChEBI" id="CHEBI:29105"/>
        <note>catalytic</note>
    </ligand>
</feature>
<feature type="binding site" evidence="1">
    <location>
        <position position="67"/>
    </location>
    <ligand>
        <name>Zn(2+)</name>
        <dbReference type="ChEBI" id="CHEBI:29105"/>
        <note>catalytic</note>
    </ligand>
</feature>
<feature type="binding site" evidence="1">
    <location>
        <position position="70"/>
    </location>
    <ligand>
        <name>GTP</name>
        <dbReference type="ChEBI" id="CHEBI:37565"/>
    </ligand>
</feature>
<feature type="binding site" evidence="1">
    <location>
        <begin position="92"/>
        <end position="94"/>
    </location>
    <ligand>
        <name>GTP</name>
        <dbReference type="ChEBI" id="CHEBI:37565"/>
    </ligand>
</feature>
<feature type="binding site" evidence="1">
    <location>
        <position position="114"/>
    </location>
    <ligand>
        <name>GTP</name>
        <dbReference type="ChEBI" id="CHEBI:37565"/>
    </ligand>
</feature>
<feature type="binding site" evidence="1">
    <location>
        <position position="149"/>
    </location>
    <ligand>
        <name>GTP</name>
        <dbReference type="ChEBI" id="CHEBI:37565"/>
    </ligand>
</feature>
<feature type="binding site" evidence="1">
    <location>
        <position position="154"/>
    </location>
    <ligand>
        <name>GTP</name>
        <dbReference type="ChEBI" id="CHEBI:37565"/>
    </ligand>
</feature>
<comment type="function">
    <text evidence="1">Catalyzes the conversion of GTP to 2,5-diamino-6-ribosylamino-4(3H)-pyrimidinone 5'-phosphate (DARP), formate and pyrophosphate.</text>
</comment>
<comment type="catalytic activity">
    <reaction evidence="1">
        <text>GTP + 4 H2O = 2,5-diamino-6-hydroxy-4-(5-phosphoribosylamino)-pyrimidine + formate + 2 phosphate + 3 H(+)</text>
        <dbReference type="Rhea" id="RHEA:23704"/>
        <dbReference type="ChEBI" id="CHEBI:15377"/>
        <dbReference type="ChEBI" id="CHEBI:15378"/>
        <dbReference type="ChEBI" id="CHEBI:15740"/>
        <dbReference type="ChEBI" id="CHEBI:37565"/>
        <dbReference type="ChEBI" id="CHEBI:43474"/>
        <dbReference type="ChEBI" id="CHEBI:58614"/>
        <dbReference type="EC" id="3.5.4.25"/>
    </reaction>
</comment>
<comment type="cofactor">
    <cofactor evidence="1">
        <name>Zn(2+)</name>
        <dbReference type="ChEBI" id="CHEBI:29105"/>
    </cofactor>
    <text evidence="1">Binds 1 zinc ion per subunit.</text>
</comment>
<comment type="pathway">
    <text evidence="1">Cofactor biosynthesis; riboflavin biosynthesis; 5-amino-6-(D-ribitylamino)uracil from GTP: step 1/4.</text>
</comment>
<comment type="subunit">
    <text evidence="1">Homodimer.</text>
</comment>
<comment type="similarity">
    <text evidence="1">Belongs to the GTP cyclohydrolase II family.</text>
</comment>
<comment type="sequence caution" evidence="2">
    <conflict type="erroneous initiation">
        <sequence resource="EMBL-CDS" id="AAN80212"/>
    </conflict>
</comment>
<keyword id="KW-0342">GTP-binding</keyword>
<keyword id="KW-0378">Hydrolase</keyword>
<keyword id="KW-0479">Metal-binding</keyword>
<keyword id="KW-0547">Nucleotide-binding</keyword>
<keyword id="KW-1185">Reference proteome</keyword>
<keyword id="KW-0686">Riboflavin biosynthesis</keyword>
<keyword id="KW-0862">Zinc</keyword>
<protein>
    <recommendedName>
        <fullName evidence="1">GTP cyclohydrolase-2</fullName>
        <ecNumber evidence="1">3.5.4.25</ecNumber>
    </recommendedName>
    <alternativeName>
        <fullName evidence="1">GTP cyclohydrolase II</fullName>
    </alternativeName>
</protein>
<proteinExistence type="inferred from homology"/>
<dbReference type="EC" id="3.5.4.25" evidence="1"/>
<dbReference type="EMBL" id="AE014075">
    <property type="protein sequence ID" value="AAN80212.1"/>
    <property type="status" value="ALT_INIT"/>
    <property type="molecule type" value="Genomic_DNA"/>
</dbReference>
<dbReference type="RefSeq" id="WP_001176294.1">
    <property type="nucleotide sequence ID" value="NZ_CP051263.1"/>
</dbReference>
<dbReference type="SMR" id="Q8FHU5"/>
<dbReference type="STRING" id="199310.c1746"/>
<dbReference type="KEGG" id="ecc:c1746"/>
<dbReference type="eggNOG" id="COG0807">
    <property type="taxonomic scope" value="Bacteria"/>
</dbReference>
<dbReference type="HOGENOM" id="CLU_020273_2_1_6"/>
<dbReference type="UniPathway" id="UPA00275">
    <property type="reaction ID" value="UER00400"/>
</dbReference>
<dbReference type="Proteomes" id="UP000001410">
    <property type="component" value="Chromosome"/>
</dbReference>
<dbReference type="GO" id="GO:0005829">
    <property type="term" value="C:cytosol"/>
    <property type="evidence" value="ECO:0007669"/>
    <property type="project" value="TreeGrafter"/>
</dbReference>
<dbReference type="GO" id="GO:0005525">
    <property type="term" value="F:GTP binding"/>
    <property type="evidence" value="ECO:0007669"/>
    <property type="project" value="UniProtKB-KW"/>
</dbReference>
<dbReference type="GO" id="GO:0003935">
    <property type="term" value="F:GTP cyclohydrolase II activity"/>
    <property type="evidence" value="ECO:0007669"/>
    <property type="project" value="UniProtKB-UniRule"/>
</dbReference>
<dbReference type="GO" id="GO:0008270">
    <property type="term" value="F:zinc ion binding"/>
    <property type="evidence" value="ECO:0007669"/>
    <property type="project" value="UniProtKB-UniRule"/>
</dbReference>
<dbReference type="GO" id="GO:0009231">
    <property type="term" value="P:riboflavin biosynthetic process"/>
    <property type="evidence" value="ECO:0007669"/>
    <property type="project" value="UniProtKB-UniRule"/>
</dbReference>
<dbReference type="CDD" id="cd00641">
    <property type="entry name" value="GTP_cyclohydro2"/>
    <property type="match status" value="1"/>
</dbReference>
<dbReference type="FunFam" id="3.40.50.10990:FF:000002">
    <property type="entry name" value="GTP cyclohydrolase-2"/>
    <property type="match status" value="1"/>
</dbReference>
<dbReference type="Gene3D" id="3.40.50.10990">
    <property type="entry name" value="GTP cyclohydrolase II"/>
    <property type="match status" value="1"/>
</dbReference>
<dbReference type="HAMAP" id="MF_00179">
    <property type="entry name" value="RibA"/>
    <property type="match status" value="1"/>
</dbReference>
<dbReference type="InterPro" id="IPR032677">
    <property type="entry name" value="GTP_cyclohydro_II"/>
</dbReference>
<dbReference type="InterPro" id="IPR000926">
    <property type="entry name" value="RibA"/>
</dbReference>
<dbReference type="InterPro" id="IPR036144">
    <property type="entry name" value="RibA-like_sf"/>
</dbReference>
<dbReference type="NCBIfam" id="NF001591">
    <property type="entry name" value="PRK00393.1"/>
    <property type="match status" value="1"/>
</dbReference>
<dbReference type="NCBIfam" id="TIGR00505">
    <property type="entry name" value="ribA"/>
    <property type="match status" value="1"/>
</dbReference>
<dbReference type="PANTHER" id="PTHR21327:SF18">
    <property type="entry name" value="3,4-DIHYDROXY-2-BUTANONE 4-PHOSPHATE SYNTHASE"/>
    <property type="match status" value="1"/>
</dbReference>
<dbReference type="PANTHER" id="PTHR21327">
    <property type="entry name" value="GTP CYCLOHYDROLASE II-RELATED"/>
    <property type="match status" value="1"/>
</dbReference>
<dbReference type="Pfam" id="PF00925">
    <property type="entry name" value="GTP_cyclohydro2"/>
    <property type="match status" value="1"/>
</dbReference>
<dbReference type="SUPFAM" id="SSF142695">
    <property type="entry name" value="RibA-like"/>
    <property type="match status" value="1"/>
</dbReference>
<gene>
    <name evidence="1" type="primary">ribA</name>
    <name type="ordered locus">c1746</name>
</gene>
<evidence type="ECO:0000255" key="1">
    <source>
        <dbReference type="HAMAP-Rule" id="MF_00179"/>
    </source>
</evidence>
<evidence type="ECO:0000305" key="2"/>
<sequence>MQLKRVAEAKLPTPWGDFLMVGFEELATGHDHVALVYGDISGHTPVLARVHSECLTGDALFSLRCDCGFQLEAALTQIAEEGRGILLYHRQEGRNIGLLNKIRAYALQDQGYDTVEANHQLGFAADERDFTLCADMFKLLGVNEVRLLTNNPKKVEILTEAGINIIERVPLIVGRNPNNEHYLDTKAEKMGHLLNK</sequence>